<protein>
    <recommendedName>
        <fullName>Modulator of FtsH protease HflC</fullName>
    </recommendedName>
</protein>
<organism>
    <name type="scientific">Shigella flexneri</name>
    <dbReference type="NCBI Taxonomy" id="623"/>
    <lineage>
        <taxon>Bacteria</taxon>
        <taxon>Pseudomonadati</taxon>
        <taxon>Pseudomonadota</taxon>
        <taxon>Gammaproteobacteria</taxon>
        <taxon>Enterobacterales</taxon>
        <taxon>Enterobacteriaceae</taxon>
        <taxon>Shigella</taxon>
    </lineage>
</organism>
<proteinExistence type="inferred from homology"/>
<sequence length="334" mass="37650">MRKSVIAIIIIVLVVLYMSVFVVKEGERGITLRFGKVLRDDDNKPLVYEPGLHFKIPFIETVKMLDARIQTMDNQADRFVTKEKKDLIVDSYIKWRISDFSRYYLATGGGDISQAEVLLKRKFSDRLRSEIGRLDVKDIVTDSRGRLTLEVRDALNSGSAGTEDEVTTPAADNAIAEAAERVTAETKGKVPVINPNSMAALGIEVVDVRIKQINLPTEVSEAIYNRMRAEREAVARRHRSQGQEEAEKLRATADYEVTRTLAEAERQGRIMRGEGDAEAAKLFADAFSKDPDFYAFIRSLRAYENSFSGNQDVMVMSPDSDFFRYMKTPTSATR</sequence>
<feature type="chain" id="PRO_0000094077" description="Modulator of FtsH protease HflC">
    <location>
        <begin position="1"/>
        <end position="334"/>
    </location>
</feature>
<feature type="topological domain" description="Cytoplasmic" evidence="1">
    <location>
        <begin position="1"/>
        <end position="2"/>
    </location>
</feature>
<feature type="transmembrane region" description="Helical" evidence="1">
    <location>
        <begin position="3"/>
        <end position="23"/>
    </location>
</feature>
<feature type="topological domain" description="Periplasmic" evidence="1">
    <location>
        <begin position="24"/>
        <end position="334"/>
    </location>
</feature>
<dbReference type="EMBL" id="AE005674">
    <property type="protein sequence ID" value="AAN45747.1"/>
    <property type="molecule type" value="Genomic_DNA"/>
</dbReference>
<dbReference type="EMBL" id="AE014073">
    <property type="protein sequence ID" value="AAP19530.1"/>
    <property type="molecule type" value="Genomic_DNA"/>
</dbReference>
<dbReference type="RefSeq" id="NP_710040.1">
    <property type="nucleotide sequence ID" value="NC_004337.2"/>
</dbReference>
<dbReference type="RefSeq" id="WP_001232412.1">
    <property type="nucleotide sequence ID" value="NZ_WPGW01000048.1"/>
</dbReference>
<dbReference type="SMR" id="P0ABC6"/>
<dbReference type="STRING" id="198214.SF4330"/>
<dbReference type="MEROPS" id="I87.001"/>
<dbReference type="PaxDb" id="198214-SF4330"/>
<dbReference type="GeneID" id="1025061"/>
<dbReference type="GeneID" id="93777646"/>
<dbReference type="KEGG" id="sfl:SF4330"/>
<dbReference type="KEGG" id="sfx:S4598"/>
<dbReference type="PATRIC" id="fig|198214.7.peg.5104"/>
<dbReference type="HOGENOM" id="CLU_059167_3_0_6"/>
<dbReference type="Proteomes" id="UP000001006">
    <property type="component" value="Chromosome"/>
</dbReference>
<dbReference type="Proteomes" id="UP000002673">
    <property type="component" value="Chromosome"/>
</dbReference>
<dbReference type="GO" id="GO:0005886">
    <property type="term" value="C:plasma membrane"/>
    <property type="evidence" value="ECO:0007669"/>
    <property type="project" value="UniProtKB-SubCell"/>
</dbReference>
<dbReference type="CDD" id="cd03405">
    <property type="entry name" value="SPFH_HflC"/>
    <property type="match status" value="1"/>
</dbReference>
<dbReference type="Gene3D" id="3.30.479.30">
    <property type="entry name" value="Band 7 domain"/>
    <property type="match status" value="1"/>
</dbReference>
<dbReference type="InterPro" id="IPR001107">
    <property type="entry name" value="Band_7"/>
</dbReference>
<dbReference type="InterPro" id="IPR036013">
    <property type="entry name" value="Band_7/SPFH_dom_sf"/>
</dbReference>
<dbReference type="InterPro" id="IPR010200">
    <property type="entry name" value="HflC"/>
</dbReference>
<dbReference type="NCBIfam" id="TIGR01932">
    <property type="entry name" value="hflC"/>
    <property type="match status" value="1"/>
</dbReference>
<dbReference type="NCBIfam" id="NF008259">
    <property type="entry name" value="PRK11029.1"/>
    <property type="match status" value="1"/>
</dbReference>
<dbReference type="PANTHER" id="PTHR42911">
    <property type="entry name" value="MODULATOR OF FTSH PROTEASE HFLC"/>
    <property type="match status" value="1"/>
</dbReference>
<dbReference type="PANTHER" id="PTHR42911:SF1">
    <property type="entry name" value="MODULATOR OF FTSH PROTEASE HFLC"/>
    <property type="match status" value="1"/>
</dbReference>
<dbReference type="Pfam" id="PF01145">
    <property type="entry name" value="Band_7"/>
    <property type="match status" value="1"/>
</dbReference>
<dbReference type="PIRSF" id="PIRSF005651">
    <property type="entry name" value="HflC"/>
    <property type="match status" value="1"/>
</dbReference>
<dbReference type="SMART" id="SM00244">
    <property type="entry name" value="PHB"/>
    <property type="match status" value="1"/>
</dbReference>
<dbReference type="SUPFAM" id="SSF117892">
    <property type="entry name" value="Band 7/SPFH domain"/>
    <property type="match status" value="2"/>
</dbReference>
<accession>P0ABC6</accession>
<accession>P25661</accession>
<gene>
    <name type="primary">hflC</name>
    <name type="ordered locus">SF4330</name>
    <name type="ordered locus">S4598</name>
</gene>
<name>HFLC_SHIFL</name>
<keyword id="KW-0997">Cell inner membrane</keyword>
<keyword id="KW-1003">Cell membrane</keyword>
<keyword id="KW-0472">Membrane</keyword>
<keyword id="KW-1185">Reference proteome</keyword>
<keyword id="KW-0735">Signal-anchor</keyword>
<keyword id="KW-0812">Transmembrane</keyword>
<keyword id="KW-1133">Transmembrane helix</keyword>
<evidence type="ECO:0000250" key="1"/>
<evidence type="ECO:0000305" key="2"/>
<comment type="function">
    <text evidence="1">HflC and HflK help govern the stability of phage lambda cII protein, and thereby control the lysogenization frequency of phage lambda. HflKC inhibits the SecY-degrading activity of FtsH, possibly helping quality control of integral membrane proteins (By similarity).</text>
</comment>
<comment type="subunit">
    <text evidence="1">HflC and HflK interact to form a complex, originally called HflA, now called HflKC. HflKC interacts with FtsH; complex formation is stimulated by ATP, and with YccA (By similarity).</text>
</comment>
<comment type="subcellular location">
    <subcellularLocation>
        <location evidence="1">Cell inner membrane</location>
        <topology evidence="1">Single-pass type II membrane protein</topology>
    </subcellularLocation>
</comment>
<comment type="similarity">
    <text evidence="2">Belongs to the band 7/mec-2 family. HflC subfamily.</text>
</comment>
<reference key="1">
    <citation type="journal article" date="2002" name="Nucleic Acids Res.">
        <title>Genome sequence of Shigella flexneri 2a: insights into pathogenicity through comparison with genomes of Escherichia coli K12 and O157.</title>
        <authorList>
            <person name="Jin Q."/>
            <person name="Yuan Z."/>
            <person name="Xu J."/>
            <person name="Wang Y."/>
            <person name="Shen Y."/>
            <person name="Lu W."/>
            <person name="Wang J."/>
            <person name="Liu H."/>
            <person name="Yang J."/>
            <person name="Yang F."/>
            <person name="Zhang X."/>
            <person name="Zhang J."/>
            <person name="Yang G."/>
            <person name="Wu H."/>
            <person name="Qu D."/>
            <person name="Dong J."/>
            <person name="Sun L."/>
            <person name="Xue Y."/>
            <person name="Zhao A."/>
            <person name="Gao Y."/>
            <person name="Zhu J."/>
            <person name="Kan B."/>
            <person name="Ding K."/>
            <person name="Chen S."/>
            <person name="Cheng H."/>
            <person name="Yao Z."/>
            <person name="He B."/>
            <person name="Chen R."/>
            <person name="Ma D."/>
            <person name="Qiang B."/>
            <person name="Wen Y."/>
            <person name="Hou Y."/>
            <person name="Yu J."/>
        </authorList>
    </citation>
    <scope>NUCLEOTIDE SEQUENCE [LARGE SCALE GENOMIC DNA]</scope>
    <source>
        <strain>301 / Serotype 2a</strain>
    </source>
</reference>
<reference key="2">
    <citation type="journal article" date="2003" name="Infect. Immun.">
        <title>Complete genome sequence and comparative genomics of Shigella flexneri serotype 2a strain 2457T.</title>
        <authorList>
            <person name="Wei J."/>
            <person name="Goldberg M.B."/>
            <person name="Burland V."/>
            <person name="Venkatesan M.M."/>
            <person name="Deng W."/>
            <person name="Fournier G."/>
            <person name="Mayhew G.F."/>
            <person name="Plunkett G. III"/>
            <person name="Rose D.J."/>
            <person name="Darling A."/>
            <person name="Mau B."/>
            <person name="Perna N.T."/>
            <person name="Payne S.M."/>
            <person name="Runyen-Janecky L.J."/>
            <person name="Zhou S."/>
            <person name="Schwartz D.C."/>
            <person name="Blattner F.R."/>
        </authorList>
    </citation>
    <scope>NUCLEOTIDE SEQUENCE [LARGE SCALE GENOMIC DNA]</scope>
    <source>
        <strain>ATCC 700930 / 2457T / Serotype 2a</strain>
    </source>
</reference>